<gene>
    <name evidence="1" type="primary">rplN</name>
    <name type="ordered locus">lmo2622</name>
</gene>
<proteinExistence type="evidence at protein level"/>
<name>RL14_LISMO</name>
<feature type="chain" id="PRO_1000055622" description="Large ribosomal subunit protein uL14">
    <location>
        <begin position="1"/>
        <end position="122"/>
    </location>
</feature>
<feature type="strand" evidence="3">
    <location>
        <begin position="7"/>
        <end position="10"/>
    </location>
</feature>
<feature type="strand" evidence="3">
    <location>
        <begin position="12"/>
        <end position="24"/>
    </location>
</feature>
<feature type="strand" evidence="3">
    <location>
        <begin position="38"/>
        <end position="46"/>
    </location>
</feature>
<feature type="strand" evidence="3">
    <location>
        <begin position="48"/>
        <end position="52"/>
    </location>
</feature>
<feature type="strand" evidence="3">
    <location>
        <begin position="57"/>
        <end position="64"/>
    </location>
</feature>
<feature type="strand" evidence="3">
    <location>
        <begin position="76"/>
        <end position="81"/>
    </location>
</feature>
<feature type="strand" evidence="3">
    <location>
        <begin position="83"/>
        <end position="87"/>
    </location>
</feature>
<feature type="strand" evidence="3">
    <location>
        <begin position="89"/>
        <end position="91"/>
    </location>
</feature>
<feature type="strand" evidence="3">
    <location>
        <begin position="93"/>
        <end position="96"/>
    </location>
</feature>
<feature type="helix" evidence="3">
    <location>
        <begin position="104"/>
        <end position="107"/>
    </location>
</feature>
<feature type="turn" evidence="3">
    <location>
        <begin position="108"/>
        <end position="110"/>
    </location>
</feature>
<feature type="helix" evidence="3">
    <location>
        <begin position="112"/>
        <end position="117"/>
    </location>
</feature>
<reference key="1">
    <citation type="journal article" date="2001" name="Science">
        <title>Comparative genomics of Listeria species.</title>
        <authorList>
            <person name="Glaser P."/>
            <person name="Frangeul L."/>
            <person name="Buchrieser C."/>
            <person name="Rusniok C."/>
            <person name="Amend A."/>
            <person name="Baquero F."/>
            <person name="Berche P."/>
            <person name="Bloecker H."/>
            <person name="Brandt P."/>
            <person name="Chakraborty T."/>
            <person name="Charbit A."/>
            <person name="Chetouani F."/>
            <person name="Couve E."/>
            <person name="de Daruvar A."/>
            <person name="Dehoux P."/>
            <person name="Domann E."/>
            <person name="Dominguez-Bernal G."/>
            <person name="Duchaud E."/>
            <person name="Durant L."/>
            <person name="Dussurget O."/>
            <person name="Entian K.-D."/>
            <person name="Fsihi H."/>
            <person name="Garcia-del Portillo F."/>
            <person name="Garrido P."/>
            <person name="Gautier L."/>
            <person name="Goebel W."/>
            <person name="Gomez-Lopez N."/>
            <person name="Hain T."/>
            <person name="Hauf J."/>
            <person name="Jackson D."/>
            <person name="Jones L.-M."/>
            <person name="Kaerst U."/>
            <person name="Kreft J."/>
            <person name="Kuhn M."/>
            <person name="Kunst F."/>
            <person name="Kurapkat G."/>
            <person name="Madueno E."/>
            <person name="Maitournam A."/>
            <person name="Mata Vicente J."/>
            <person name="Ng E."/>
            <person name="Nedjari H."/>
            <person name="Nordsiek G."/>
            <person name="Novella S."/>
            <person name="de Pablos B."/>
            <person name="Perez-Diaz J.-C."/>
            <person name="Purcell R."/>
            <person name="Remmel B."/>
            <person name="Rose M."/>
            <person name="Schlueter T."/>
            <person name="Simoes N."/>
            <person name="Tierrez A."/>
            <person name="Vazquez-Boland J.-A."/>
            <person name="Voss H."/>
            <person name="Wehland J."/>
            <person name="Cossart P."/>
        </authorList>
    </citation>
    <scope>NUCLEOTIDE SEQUENCE [LARGE SCALE GENOMIC DNA]</scope>
    <source>
        <strain>ATCC BAA-679 / EGD-e</strain>
    </source>
</reference>
<dbReference type="EMBL" id="AL591983">
    <property type="protein sequence ID" value="CAD00700.1"/>
    <property type="molecule type" value="Genomic_DNA"/>
</dbReference>
<dbReference type="PIR" id="AE1778">
    <property type="entry name" value="AE1778"/>
</dbReference>
<dbReference type="PIR" id="AF1402">
    <property type="entry name" value="AF1402"/>
</dbReference>
<dbReference type="RefSeq" id="NP_466145.1">
    <property type="nucleotide sequence ID" value="NC_003210.1"/>
</dbReference>
<dbReference type="RefSeq" id="WP_003723686.1">
    <property type="nucleotide sequence ID" value="NZ_CP149495.1"/>
</dbReference>
<dbReference type="PDB" id="7NHN">
    <property type="method" value="EM"/>
    <property type="resolution" value="2.90 A"/>
    <property type="chains" value="N=1-122"/>
</dbReference>
<dbReference type="PDB" id="8A57">
    <property type="method" value="EM"/>
    <property type="resolution" value="2.30 A"/>
    <property type="chains" value="N=1-122"/>
</dbReference>
<dbReference type="PDB" id="8A5I">
    <property type="method" value="EM"/>
    <property type="resolution" value="2.30 A"/>
    <property type="chains" value="N=1-122"/>
</dbReference>
<dbReference type="PDB" id="8A63">
    <property type="method" value="EM"/>
    <property type="resolution" value="3.10 A"/>
    <property type="chains" value="N=1-122"/>
</dbReference>
<dbReference type="PDBsum" id="7NHN"/>
<dbReference type="PDBsum" id="8A57"/>
<dbReference type="PDBsum" id="8A5I"/>
<dbReference type="PDBsum" id="8A63"/>
<dbReference type="EMDB" id="EMD-12334"/>
<dbReference type="EMDB" id="EMD-15161"/>
<dbReference type="EMDB" id="EMD-15175"/>
<dbReference type="EMDB" id="EMD-15204"/>
<dbReference type="SMR" id="Q927L7"/>
<dbReference type="STRING" id="169963.gene:17595340"/>
<dbReference type="PaxDb" id="169963-lmo2622"/>
<dbReference type="EnsemblBacteria" id="CAD00700">
    <property type="protein sequence ID" value="CAD00700"/>
    <property type="gene ID" value="CAD00700"/>
</dbReference>
<dbReference type="GeneID" id="93240503"/>
<dbReference type="GeneID" id="987190"/>
<dbReference type="KEGG" id="lmo:lmo2622"/>
<dbReference type="PATRIC" id="fig|169963.11.peg.2686"/>
<dbReference type="eggNOG" id="COG0093">
    <property type="taxonomic scope" value="Bacteria"/>
</dbReference>
<dbReference type="HOGENOM" id="CLU_095071_2_1_9"/>
<dbReference type="OrthoDB" id="9806379at2"/>
<dbReference type="PhylomeDB" id="Q927L7"/>
<dbReference type="BioCyc" id="LMON169963:LMO2622-MONOMER"/>
<dbReference type="Proteomes" id="UP000000817">
    <property type="component" value="Chromosome"/>
</dbReference>
<dbReference type="GO" id="GO:0022625">
    <property type="term" value="C:cytosolic large ribosomal subunit"/>
    <property type="evidence" value="ECO:0000318"/>
    <property type="project" value="GO_Central"/>
</dbReference>
<dbReference type="GO" id="GO:0070180">
    <property type="term" value="F:large ribosomal subunit rRNA binding"/>
    <property type="evidence" value="ECO:0000318"/>
    <property type="project" value="GO_Central"/>
</dbReference>
<dbReference type="GO" id="GO:0003735">
    <property type="term" value="F:structural constituent of ribosome"/>
    <property type="evidence" value="ECO:0000318"/>
    <property type="project" value="GO_Central"/>
</dbReference>
<dbReference type="GO" id="GO:0006412">
    <property type="term" value="P:translation"/>
    <property type="evidence" value="ECO:0007669"/>
    <property type="project" value="UniProtKB-UniRule"/>
</dbReference>
<dbReference type="CDD" id="cd00337">
    <property type="entry name" value="Ribosomal_uL14"/>
    <property type="match status" value="1"/>
</dbReference>
<dbReference type="FunFam" id="2.40.150.20:FF:000001">
    <property type="entry name" value="50S ribosomal protein L14"/>
    <property type="match status" value="1"/>
</dbReference>
<dbReference type="Gene3D" id="2.40.150.20">
    <property type="entry name" value="Ribosomal protein L14"/>
    <property type="match status" value="1"/>
</dbReference>
<dbReference type="HAMAP" id="MF_01367">
    <property type="entry name" value="Ribosomal_uL14"/>
    <property type="match status" value="1"/>
</dbReference>
<dbReference type="InterPro" id="IPR000218">
    <property type="entry name" value="Ribosomal_uL14"/>
</dbReference>
<dbReference type="InterPro" id="IPR005745">
    <property type="entry name" value="Ribosomal_uL14_bac-type"/>
</dbReference>
<dbReference type="InterPro" id="IPR019972">
    <property type="entry name" value="Ribosomal_uL14_CS"/>
</dbReference>
<dbReference type="InterPro" id="IPR036853">
    <property type="entry name" value="Ribosomal_uL14_sf"/>
</dbReference>
<dbReference type="NCBIfam" id="TIGR01067">
    <property type="entry name" value="rplN_bact"/>
    <property type="match status" value="1"/>
</dbReference>
<dbReference type="PANTHER" id="PTHR11761">
    <property type="entry name" value="50S/60S RIBOSOMAL PROTEIN L14/L23"/>
    <property type="match status" value="1"/>
</dbReference>
<dbReference type="PANTHER" id="PTHR11761:SF3">
    <property type="entry name" value="LARGE RIBOSOMAL SUBUNIT PROTEIN UL14M"/>
    <property type="match status" value="1"/>
</dbReference>
<dbReference type="Pfam" id="PF00238">
    <property type="entry name" value="Ribosomal_L14"/>
    <property type="match status" value="1"/>
</dbReference>
<dbReference type="SMART" id="SM01374">
    <property type="entry name" value="Ribosomal_L14"/>
    <property type="match status" value="1"/>
</dbReference>
<dbReference type="SUPFAM" id="SSF50193">
    <property type="entry name" value="Ribosomal protein L14"/>
    <property type="match status" value="1"/>
</dbReference>
<dbReference type="PROSITE" id="PS00049">
    <property type="entry name" value="RIBOSOMAL_L14"/>
    <property type="match status" value="1"/>
</dbReference>
<protein>
    <recommendedName>
        <fullName evidence="1">Large ribosomal subunit protein uL14</fullName>
    </recommendedName>
    <alternativeName>
        <fullName evidence="2">50S ribosomal protein L14</fullName>
    </alternativeName>
</protein>
<organism>
    <name type="scientific">Listeria monocytogenes serovar 1/2a (strain ATCC BAA-679 / EGD-e)</name>
    <dbReference type="NCBI Taxonomy" id="169963"/>
    <lineage>
        <taxon>Bacteria</taxon>
        <taxon>Bacillati</taxon>
        <taxon>Bacillota</taxon>
        <taxon>Bacilli</taxon>
        <taxon>Bacillales</taxon>
        <taxon>Listeriaceae</taxon>
        <taxon>Listeria</taxon>
    </lineage>
</organism>
<evidence type="ECO:0000255" key="1">
    <source>
        <dbReference type="HAMAP-Rule" id="MF_01367"/>
    </source>
</evidence>
<evidence type="ECO:0000305" key="2"/>
<evidence type="ECO:0007829" key="3">
    <source>
        <dbReference type="PDB" id="8A57"/>
    </source>
</evidence>
<sequence>MIQQESRMKVADNSGAREVLTIKVLGGSGRKTANIGDVVVCTVKQATPGGVVKKGEVVKAVIVRTKSGARRQDGSYIKFDENACVIIRDDKSPRGTRIFGPVARELRENNFMKIVSLAPEVL</sequence>
<comment type="function">
    <text evidence="1">Binds to 23S rRNA. Forms part of two intersubunit bridges in the 70S ribosome.</text>
</comment>
<comment type="subunit">
    <text evidence="1">Part of the 50S ribosomal subunit. Forms a cluster with proteins L3 and L19. In the 70S ribosome, L14 and L19 interact and together make contacts with the 16S rRNA in bridges B5 and B8.</text>
</comment>
<comment type="similarity">
    <text evidence="1">Belongs to the universal ribosomal protein uL14 family.</text>
</comment>
<keyword id="KW-0002">3D-structure</keyword>
<keyword id="KW-1185">Reference proteome</keyword>
<keyword id="KW-0687">Ribonucleoprotein</keyword>
<keyword id="KW-0689">Ribosomal protein</keyword>
<keyword id="KW-0694">RNA-binding</keyword>
<keyword id="KW-0699">rRNA-binding</keyword>
<accession>Q927L7</accession>